<accession>A9BIV9</accession>
<name>FOLD_PETMO</name>
<proteinExistence type="inferred from homology"/>
<dbReference type="EC" id="1.5.1.5" evidence="1"/>
<dbReference type="EC" id="3.5.4.9" evidence="1"/>
<dbReference type="EMBL" id="CP000879">
    <property type="protein sequence ID" value="ABX32447.1"/>
    <property type="molecule type" value="Genomic_DNA"/>
</dbReference>
<dbReference type="RefSeq" id="WP_012209544.1">
    <property type="nucleotide sequence ID" value="NC_010003.1"/>
</dbReference>
<dbReference type="SMR" id="A9BIV9"/>
<dbReference type="STRING" id="403833.Pmob_1757"/>
<dbReference type="KEGG" id="pmo:Pmob_1757"/>
<dbReference type="eggNOG" id="COG0190">
    <property type="taxonomic scope" value="Bacteria"/>
</dbReference>
<dbReference type="HOGENOM" id="CLU_034045_2_1_0"/>
<dbReference type="OrthoDB" id="9803580at2"/>
<dbReference type="UniPathway" id="UPA00193"/>
<dbReference type="Proteomes" id="UP000000789">
    <property type="component" value="Chromosome"/>
</dbReference>
<dbReference type="GO" id="GO:0005829">
    <property type="term" value="C:cytosol"/>
    <property type="evidence" value="ECO:0007669"/>
    <property type="project" value="TreeGrafter"/>
</dbReference>
<dbReference type="GO" id="GO:0004477">
    <property type="term" value="F:methenyltetrahydrofolate cyclohydrolase activity"/>
    <property type="evidence" value="ECO:0007669"/>
    <property type="project" value="UniProtKB-UniRule"/>
</dbReference>
<dbReference type="GO" id="GO:0004488">
    <property type="term" value="F:methylenetetrahydrofolate dehydrogenase (NADP+) activity"/>
    <property type="evidence" value="ECO:0007669"/>
    <property type="project" value="UniProtKB-UniRule"/>
</dbReference>
<dbReference type="GO" id="GO:0000105">
    <property type="term" value="P:L-histidine biosynthetic process"/>
    <property type="evidence" value="ECO:0007669"/>
    <property type="project" value="UniProtKB-KW"/>
</dbReference>
<dbReference type="GO" id="GO:0009086">
    <property type="term" value="P:methionine biosynthetic process"/>
    <property type="evidence" value="ECO:0007669"/>
    <property type="project" value="UniProtKB-KW"/>
</dbReference>
<dbReference type="GO" id="GO:0006164">
    <property type="term" value="P:purine nucleotide biosynthetic process"/>
    <property type="evidence" value="ECO:0007669"/>
    <property type="project" value="UniProtKB-KW"/>
</dbReference>
<dbReference type="GO" id="GO:0035999">
    <property type="term" value="P:tetrahydrofolate interconversion"/>
    <property type="evidence" value="ECO:0007669"/>
    <property type="project" value="UniProtKB-UniRule"/>
</dbReference>
<dbReference type="CDD" id="cd01080">
    <property type="entry name" value="NAD_bind_m-THF_DH_Cyclohyd"/>
    <property type="match status" value="1"/>
</dbReference>
<dbReference type="Gene3D" id="3.40.50.10860">
    <property type="entry name" value="Leucine Dehydrogenase, chain A, domain 1"/>
    <property type="match status" value="1"/>
</dbReference>
<dbReference type="Gene3D" id="3.40.50.720">
    <property type="entry name" value="NAD(P)-binding Rossmann-like Domain"/>
    <property type="match status" value="1"/>
</dbReference>
<dbReference type="HAMAP" id="MF_01576">
    <property type="entry name" value="THF_DHG_CYH"/>
    <property type="match status" value="1"/>
</dbReference>
<dbReference type="InterPro" id="IPR046346">
    <property type="entry name" value="Aminoacid_DH-like_N_sf"/>
</dbReference>
<dbReference type="InterPro" id="IPR036291">
    <property type="entry name" value="NAD(P)-bd_dom_sf"/>
</dbReference>
<dbReference type="InterPro" id="IPR000672">
    <property type="entry name" value="THF_DH/CycHdrlase"/>
</dbReference>
<dbReference type="InterPro" id="IPR020630">
    <property type="entry name" value="THF_DH/CycHdrlase_cat_dom"/>
</dbReference>
<dbReference type="InterPro" id="IPR020631">
    <property type="entry name" value="THF_DH/CycHdrlase_NAD-bd_dom"/>
</dbReference>
<dbReference type="PANTHER" id="PTHR48099:SF5">
    <property type="entry name" value="C-1-TETRAHYDROFOLATE SYNTHASE, CYTOPLASMIC"/>
    <property type="match status" value="1"/>
</dbReference>
<dbReference type="PANTHER" id="PTHR48099">
    <property type="entry name" value="C-1-TETRAHYDROFOLATE SYNTHASE, CYTOPLASMIC-RELATED"/>
    <property type="match status" value="1"/>
</dbReference>
<dbReference type="Pfam" id="PF00763">
    <property type="entry name" value="THF_DHG_CYH"/>
    <property type="match status" value="1"/>
</dbReference>
<dbReference type="Pfam" id="PF02882">
    <property type="entry name" value="THF_DHG_CYH_C"/>
    <property type="match status" value="1"/>
</dbReference>
<dbReference type="PRINTS" id="PR00085">
    <property type="entry name" value="THFDHDRGNASE"/>
</dbReference>
<dbReference type="SUPFAM" id="SSF53223">
    <property type="entry name" value="Aminoacid dehydrogenase-like, N-terminal domain"/>
    <property type="match status" value="1"/>
</dbReference>
<dbReference type="SUPFAM" id="SSF51735">
    <property type="entry name" value="NAD(P)-binding Rossmann-fold domains"/>
    <property type="match status" value="1"/>
</dbReference>
<reference key="1">
    <citation type="submission" date="2007-11" db="EMBL/GenBank/DDBJ databases">
        <title>Complete sequence of Petroga mobilis SJ95.</title>
        <authorList>
            <consortium name="US DOE Joint Genome Institute"/>
            <person name="Copeland A."/>
            <person name="Lucas S."/>
            <person name="Lapidus A."/>
            <person name="Barry K."/>
            <person name="Glavina del Rio T."/>
            <person name="Dalin E."/>
            <person name="Tice H."/>
            <person name="Pitluck S."/>
            <person name="Meincke L."/>
            <person name="Brettin T."/>
            <person name="Bruce D."/>
            <person name="Detter J.C."/>
            <person name="Han C."/>
            <person name="Kuske C.R."/>
            <person name="Schmutz J."/>
            <person name="Larimer F."/>
            <person name="Land M."/>
            <person name="Hauser L."/>
            <person name="Kyrpides N."/>
            <person name="Mikhailova N."/>
            <person name="Noll K."/>
            <person name="Richardson P."/>
        </authorList>
    </citation>
    <scope>NUCLEOTIDE SEQUENCE [LARGE SCALE GENOMIC DNA]</scope>
    <source>
        <strain>DSM 10674 / SJ95</strain>
    </source>
</reference>
<evidence type="ECO:0000255" key="1">
    <source>
        <dbReference type="HAMAP-Rule" id="MF_01576"/>
    </source>
</evidence>
<keyword id="KW-0028">Amino-acid biosynthesis</keyword>
<keyword id="KW-0368">Histidine biosynthesis</keyword>
<keyword id="KW-0378">Hydrolase</keyword>
<keyword id="KW-0486">Methionine biosynthesis</keyword>
<keyword id="KW-0511">Multifunctional enzyme</keyword>
<keyword id="KW-0521">NADP</keyword>
<keyword id="KW-0554">One-carbon metabolism</keyword>
<keyword id="KW-0560">Oxidoreductase</keyword>
<keyword id="KW-0658">Purine biosynthesis</keyword>
<comment type="function">
    <text evidence="1">Catalyzes the oxidation of 5,10-methylenetetrahydrofolate to 5,10-methenyltetrahydrofolate and then the hydrolysis of 5,10-methenyltetrahydrofolate to 10-formyltetrahydrofolate.</text>
</comment>
<comment type="catalytic activity">
    <reaction evidence="1">
        <text>(6R)-5,10-methylene-5,6,7,8-tetrahydrofolate + NADP(+) = (6R)-5,10-methenyltetrahydrofolate + NADPH</text>
        <dbReference type="Rhea" id="RHEA:22812"/>
        <dbReference type="ChEBI" id="CHEBI:15636"/>
        <dbReference type="ChEBI" id="CHEBI:57455"/>
        <dbReference type="ChEBI" id="CHEBI:57783"/>
        <dbReference type="ChEBI" id="CHEBI:58349"/>
        <dbReference type="EC" id="1.5.1.5"/>
    </reaction>
</comment>
<comment type="catalytic activity">
    <reaction evidence="1">
        <text>(6R)-5,10-methenyltetrahydrofolate + H2O = (6R)-10-formyltetrahydrofolate + H(+)</text>
        <dbReference type="Rhea" id="RHEA:23700"/>
        <dbReference type="ChEBI" id="CHEBI:15377"/>
        <dbReference type="ChEBI" id="CHEBI:15378"/>
        <dbReference type="ChEBI" id="CHEBI:57455"/>
        <dbReference type="ChEBI" id="CHEBI:195366"/>
        <dbReference type="EC" id="3.5.4.9"/>
    </reaction>
</comment>
<comment type="pathway">
    <text evidence="1">One-carbon metabolism; tetrahydrofolate interconversion.</text>
</comment>
<comment type="subunit">
    <text evidence="1">Homodimer.</text>
</comment>
<comment type="similarity">
    <text evidence="1">Belongs to the tetrahydrofolate dehydrogenase/cyclohydrolase family.</text>
</comment>
<feature type="chain" id="PRO_1000087909" description="Bifunctional protein FolD">
    <location>
        <begin position="1"/>
        <end position="273"/>
    </location>
</feature>
<feature type="binding site" evidence="1">
    <location>
        <begin position="152"/>
        <end position="154"/>
    </location>
    <ligand>
        <name>NADP(+)</name>
        <dbReference type="ChEBI" id="CHEBI:58349"/>
    </ligand>
</feature>
<feature type="binding site" evidence="1">
    <location>
        <position position="179"/>
    </location>
    <ligand>
        <name>NADP(+)</name>
        <dbReference type="ChEBI" id="CHEBI:58349"/>
    </ligand>
</feature>
<feature type="binding site" evidence="1">
    <location>
        <position position="220"/>
    </location>
    <ligand>
        <name>NADP(+)</name>
        <dbReference type="ChEBI" id="CHEBI:58349"/>
    </ligand>
</feature>
<sequence length="273" mass="30051">MLIEVDNIIDEIKAEISSLKEKVPYEPKLVSLVVEPDESTKSYLNSQKRNAKKFGINLEIVESNDLTNDLRKYNEDDDTDAIFIARPLKKGYTELDIAKYINPEKDVEGVSLHNIGSMFYEKELFVPCTAEAVVKIIEDTTDVRGKNIVILGRSTTVGKPAAIMLQRHGRDATVTVTHTKTKNLKEITKEADILVAAIGKANFVDSTFVKEGMIVIDVGINVVDGKIVGDVNKDVSEICQLTPVPGGVGSVTTAILMRNVFRAANNKKGDMQL</sequence>
<gene>
    <name evidence="1" type="primary">folD</name>
    <name type="ordered locus">Pmob_1757</name>
</gene>
<protein>
    <recommendedName>
        <fullName evidence="1">Bifunctional protein FolD</fullName>
    </recommendedName>
    <domain>
        <recommendedName>
            <fullName evidence="1">Methylenetetrahydrofolate dehydrogenase</fullName>
            <ecNumber evidence="1">1.5.1.5</ecNumber>
        </recommendedName>
    </domain>
    <domain>
        <recommendedName>
            <fullName evidence="1">Methenyltetrahydrofolate cyclohydrolase</fullName>
            <ecNumber evidence="1">3.5.4.9</ecNumber>
        </recommendedName>
    </domain>
</protein>
<organism>
    <name type="scientific">Petrotoga mobilis (strain DSM 10674 / SJ95)</name>
    <dbReference type="NCBI Taxonomy" id="403833"/>
    <lineage>
        <taxon>Bacteria</taxon>
        <taxon>Thermotogati</taxon>
        <taxon>Thermotogota</taxon>
        <taxon>Thermotogae</taxon>
        <taxon>Petrotogales</taxon>
        <taxon>Petrotogaceae</taxon>
        <taxon>Petrotoga</taxon>
    </lineage>
</organism>